<feature type="chain" id="PRO_0000047926" description="DNA-directed RNA polymerase subunit beta">
    <location>
        <begin position="1"/>
        <end position="1169"/>
    </location>
</feature>
<feature type="mutagenesis site" description="Rifampicin (Rif) resistant." evidence="2">
    <original>Q</original>
    <variation>K</variation>
    <variation>L</variation>
    <location>
        <position position="429"/>
    </location>
</feature>
<feature type="mutagenesis site" description="Rifampicin (Rif) resistant." evidence="2 3">
    <original>D</original>
    <variation>V</variation>
    <location>
        <position position="432"/>
    </location>
</feature>
<feature type="mutagenesis site" description="Rifampicin (Rif) resistant; RbpA no longer rescues transcription in the presence of Rif. Decreased affinity for Rif, no change in affinity for RbpA." evidence="2 3">
    <original>D</original>
    <variation>Y</variation>
    <location>
        <position position="432"/>
    </location>
</feature>
<feature type="mutagenesis site" description="Rifampicin (Rif) resistant." evidence="2">
    <original>H</original>
    <variation>D</variation>
    <variation>L</variation>
    <variation>P</variation>
    <variation>R</variation>
    <variation>Y</variation>
    <location>
        <position position="442"/>
    </location>
</feature>
<feature type="mutagenesis site" description="Rifampicin (Rif) resistant." evidence="2">
    <original>R</original>
    <variation>L</variation>
    <variation>P</variation>
    <location>
        <position position="445"/>
    </location>
</feature>
<feature type="mutagenesis site" description="Rifampicin (Rif) resistant; RbpA no longer rescues transcription in the presence of Rif, decreased affinity for Rif, no change in affinity for RbpA; tested in the Leu mutation." evidence="2 3">
    <original>S</original>
    <variation>L</variation>
    <variation>P</variation>
    <variation>W</variation>
    <location>
        <position position="447"/>
    </location>
</feature>
<feature type="mutagenesis site" description="Rifampicin (Rif) resistant." evidence="2">
    <original>L</original>
    <variation>P</variation>
    <location>
        <position position="449"/>
    </location>
</feature>
<feature type="strand" evidence="8">
    <location>
        <begin position="23"/>
        <end position="25"/>
    </location>
</feature>
<feature type="strand" evidence="5">
    <location>
        <begin position="29"/>
        <end position="31"/>
    </location>
</feature>
<feature type="helix" evidence="5">
    <location>
        <begin position="46"/>
        <end position="56"/>
    </location>
</feature>
<feature type="helix" evidence="5">
    <location>
        <begin position="59"/>
        <end position="67"/>
    </location>
</feature>
<feature type="strand" evidence="10">
    <location>
        <begin position="69"/>
        <end position="71"/>
    </location>
</feature>
<feature type="helix" evidence="5">
    <location>
        <begin position="76"/>
        <end position="84"/>
    </location>
</feature>
<feature type="strand" evidence="9">
    <location>
        <begin position="86"/>
        <end position="88"/>
    </location>
</feature>
<feature type="strand" evidence="15">
    <location>
        <begin position="90"/>
        <end position="92"/>
    </location>
</feature>
<feature type="strand" evidence="5">
    <location>
        <begin position="93"/>
        <end position="103"/>
    </location>
</feature>
<feature type="helix" evidence="5">
    <location>
        <begin position="110"/>
        <end position="116"/>
    </location>
</feature>
<feature type="strand" evidence="5">
    <location>
        <begin position="121"/>
        <end position="132"/>
    </location>
</feature>
<feature type="turn" evidence="5">
    <location>
        <begin position="133"/>
        <end position="135"/>
    </location>
</feature>
<feature type="strand" evidence="5">
    <location>
        <begin position="138"/>
        <end position="149"/>
    </location>
</feature>
<feature type="turn" evidence="13">
    <location>
        <begin position="153"/>
        <end position="155"/>
    </location>
</feature>
<feature type="strand" evidence="5">
    <location>
        <begin position="157"/>
        <end position="159"/>
    </location>
</feature>
<feature type="strand" evidence="5">
    <location>
        <begin position="162"/>
        <end position="166"/>
    </location>
</feature>
<feature type="strand" evidence="5">
    <location>
        <begin position="168"/>
        <end position="172"/>
    </location>
</feature>
<feature type="strand" evidence="5">
    <location>
        <begin position="174"/>
        <end position="178"/>
    </location>
</feature>
<feature type="turn" evidence="5">
    <location>
        <begin position="184"/>
        <end position="186"/>
    </location>
</feature>
<feature type="strand" evidence="5">
    <location>
        <begin position="193"/>
        <end position="196"/>
    </location>
</feature>
<feature type="strand" evidence="5">
    <location>
        <begin position="198"/>
        <end position="200"/>
    </location>
</feature>
<feature type="strand" evidence="5">
    <location>
        <begin position="203"/>
        <end position="205"/>
    </location>
</feature>
<feature type="strand" evidence="17">
    <location>
        <begin position="209"/>
        <end position="211"/>
    </location>
</feature>
<feature type="strand" evidence="13">
    <location>
        <begin position="213"/>
        <end position="215"/>
    </location>
</feature>
<feature type="strand" evidence="8">
    <location>
        <begin position="216"/>
        <end position="219"/>
    </location>
</feature>
<feature type="helix" evidence="5">
    <location>
        <begin position="225"/>
        <end position="229"/>
    </location>
</feature>
<feature type="turn" evidence="5">
    <location>
        <begin position="230"/>
        <end position="233"/>
    </location>
</feature>
<feature type="helix" evidence="5">
    <location>
        <begin position="236"/>
        <end position="243"/>
    </location>
</feature>
<feature type="helix" evidence="5">
    <location>
        <begin position="247"/>
        <end position="255"/>
    </location>
</feature>
<feature type="helix" evidence="5">
    <location>
        <begin position="261"/>
        <end position="272"/>
    </location>
</feature>
<feature type="strand" evidence="14">
    <location>
        <begin position="273"/>
        <end position="275"/>
    </location>
</feature>
<feature type="helix" evidence="5">
    <location>
        <begin position="280"/>
        <end position="290"/>
    </location>
</feature>
<feature type="strand" evidence="14">
    <location>
        <begin position="291"/>
        <end position="293"/>
    </location>
</feature>
<feature type="turn" evidence="5">
    <location>
        <begin position="294"/>
        <end position="296"/>
    </location>
</feature>
<feature type="helix" evidence="5">
    <location>
        <begin position="301"/>
        <end position="310"/>
    </location>
</feature>
<feature type="turn" evidence="17">
    <location>
        <begin position="313"/>
        <end position="316"/>
    </location>
</feature>
<feature type="helix" evidence="5">
    <location>
        <begin position="326"/>
        <end position="340"/>
    </location>
</feature>
<feature type="strand" evidence="5">
    <location>
        <begin position="344"/>
        <end position="346"/>
    </location>
</feature>
<feature type="strand" evidence="5">
    <location>
        <begin position="349"/>
        <end position="351"/>
    </location>
</feature>
<feature type="strand" evidence="13">
    <location>
        <begin position="353"/>
        <end position="355"/>
    </location>
</feature>
<feature type="strand" evidence="8">
    <location>
        <begin position="361"/>
        <end position="363"/>
    </location>
</feature>
<feature type="helix" evidence="5">
    <location>
        <begin position="364"/>
        <end position="366"/>
    </location>
</feature>
<feature type="strand" evidence="5">
    <location>
        <begin position="367"/>
        <end position="370"/>
    </location>
</feature>
<feature type="helix" evidence="5">
    <location>
        <begin position="372"/>
        <end position="397"/>
    </location>
</feature>
<feature type="strand" evidence="16">
    <location>
        <begin position="400"/>
        <end position="402"/>
    </location>
</feature>
<feature type="helix" evidence="5">
    <location>
        <begin position="405"/>
        <end position="408"/>
    </location>
</feature>
<feature type="helix" evidence="5">
    <location>
        <begin position="412"/>
        <end position="422"/>
    </location>
</feature>
<feature type="strand" evidence="5">
    <location>
        <begin position="426"/>
        <end position="430"/>
    </location>
</feature>
<feature type="helix" evidence="5">
    <location>
        <begin position="436"/>
        <end position="442"/>
    </location>
</feature>
<feature type="strand" evidence="5">
    <location>
        <begin position="445"/>
        <end position="448"/>
    </location>
</feature>
<feature type="turn" evidence="15">
    <location>
        <begin position="451"/>
        <end position="453"/>
    </location>
</feature>
<feature type="turn" evidence="5">
    <location>
        <begin position="456"/>
        <end position="458"/>
    </location>
</feature>
<feature type="helix" evidence="5">
    <location>
        <begin position="461"/>
        <end position="464"/>
    </location>
</feature>
<feature type="helix" evidence="5">
    <location>
        <begin position="468"/>
        <end position="470"/>
    </location>
</feature>
<feature type="turn" evidence="5">
    <location>
        <begin position="471"/>
        <end position="473"/>
    </location>
</feature>
<feature type="helix" evidence="10">
    <location>
        <begin position="476"/>
        <end position="478"/>
    </location>
</feature>
<feature type="turn" evidence="5">
    <location>
        <begin position="483"/>
        <end position="487"/>
    </location>
</feature>
<feature type="strand" evidence="5">
    <location>
        <begin position="488"/>
        <end position="491"/>
    </location>
</feature>
<feature type="strand" evidence="11">
    <location>
        <begin position="499"/>
        <end position="501"/>
    </location>
</feature>
<feature type="strand" evidence="5">
    <location>
        <begin position="503"/>
        <end position="511"/>
    </location>
</feature>
<feature type="strand" evidence="5">
    <location>
        <begin position="514"/>
        <end position="522"/>
    </location>
</feature>
<feature type="helix" evidence="5">
    <location>
        <begin position="524"/>
        <end position="527"/>
    </location>
</feature>
<feature type="strand" evidence="16">
    <location>
        <begin position="535"/>
        <end position="537"/>
    </location>
</feature>
<feature type="strand" evidence="8">
    <location>
        <begin position="541"/>
        <end position="543"/>
    </location>
</feature>
<feature type="strand" evidence="14">
    <location>
        <begin position="544"/>
        <end position="546"/>
    </location>
</feature>
<feature type="strand" evidence="5">
    <location>
        <begin position="547"/>
        <end position="553"/>
    </location>
</feature>
<feature type="strand" evidence="5">
    <location>
        <begin position="555"/>
        <end position="557"/>
    </location>
</feature>
<feature type="strand" evidence="5">
    <location>
        <begin position="559"/>
        <end position="563"/>
    </location>
</feature>
<feature type="helix" evidence="7">
    <location>
        <begin position="564"/>
        <end position="566"/>
    </location>
</feature>
<feature type="strand" evidence="5">
    <location>
        <begin position="569"/>
        <end position="573"/>
    </location>
</feature>
<feature type="strand" evidence="5">
    <location>
        <begin position="576"/>
        <end position="578"/>
    </location>
</feature>
<feature type="helix" evidence="5">
    <location>
        <begin position="582"/>
        <end position="584"/>
    </location>
</feature>
<feature type="helix" evidence="5">
    <location>
        <begin position="588"/>
        <end position="590"/>
    </location>
</feature>
<feature type="helix" evidence="5">
    <location>
        <begin position="593"/>
        <end position="603"/>
    </location>
</feature>
<feature type="strand" evidence="12">
    <location>
        <begin position="609"/>
        <end position="611"/>
    </location>
</feature>
<feature type="strand" evidence="5">
    <location>
        <begin position="616"/>
        <end position="618"/>
    </location>
</feature>
<feature type="helix" evidence="5">
    <location>
        <begin position="622"/>
        <end position="627"/>
    </location>
</feature>
<feature type="turn" evidence="14">
    <location>
        <begin position="628"/>
        <end position="630"/>
    </location>
</feature>
<feature type="strand" evidence="5">
    <location>
        <begin position="632"/>
        <end position="634"/>
    </location>
</feature>
<feature type="strand" evidence="5">
    <location>
        <begin position="639"/>
        <end position="644"/>
    </location>
</feature>
<feature type="strand" evidence="5">
    <location>
        <begin position="646"/>
        <end position="653"/>
    </location>
</feature>
<feature type="strand" evidence="5">
    <location>
        <begin position="658"/>
        <end position="662"/>
    </location>
</feature>
<feature type="strand" evidence="11">
    <location>
        <begin position="666"/>
        <end position="668"/>
    </location>
</feature>
<feature type="strand" evidence="11">
    <location>
        <begin position="672"/>
        <end position="675"/>
    </location>
</feature>
<feature type="strand" evidence="5">
    <location>
        <begin position="692"/>
        <end position="695"/>
    </location>
</feature>
<feature type="strand" evidence="5">
    <location>
        <begin position="697"/>
        <end position="700"/>
    </location>
</feature>
<feature type="strand" evidence="5">
    <location>
        <begin position="707"/>
        <end position="713"/>
    </location>
</feature>
<feature type="turn" evidence="5">
    <location>
        <begin position="718"/>
        <end position="720"/>
    </location>
</feature>
<feature type="helix" evidence="16">
    <location>
        <begin position="722"/>
        <end position="724"/>
    </location>
</feature>
<feature type="strand" evidence="5">
    <location>
        <begin position="726"/>
        <end position="729"/>
    </location>
</feature>
<feature type="helix" evidence="5">
    <location>
        <begin position="731"/>
        <end position="734"/>
    </location>
</feature>
<feature type="turn" evidence="16">
    <location>
        <begin position="735"/>
        <end position="738"/>
    </location>
</feature>
<feature type="strand" evidence="5">
    <location>
        <begin position="740"/>
        <end position="753"/>
    </location>
</feature>
<feature type="strand" evidence="11">
    <location>
        <begin position="754"/>
        <end position="757"/>
    </location>
</feature>
<feature type="strand" evidence="6">
    <location>
        <begin position="759"/>
        <end position="762"/>
    </location>
</feature>
<feature type="helix" evidence="5">
    <location>
        <begin position="771"/>
        <end position="774"/>
    </location>
</feature>
<feature type="strand" evidence="5">
    <location>
        <begin position="779"/>
        <end position="781"/>
    </location>
</feature>
<feature type="strand" evidence="13">
    <location>
        <begin position="786"/>
        <end position="788"/>
    </location>
</feature>
<feature type="strand" evidence="5">
    <location>
        <begin position="792"/>
        <end position="794"/>
    </location>
</feature>
<feature type="strand" evidence="5">
    <location>
        <begin position="796"/>
        <end position="799"/>
    </location>
</feature>
<feature type="helix" evidence="5">
    <location>
        <begin position="807"/>
        <end position="816"/>
    </location>
</feature>
<feature type="strand" evidence="5">
    <location>
        <begin position="822"/>
        <end position="825"/>
    </location>
</feature>
<feature type="strand" evidence="5">
    <location>
        <begin position="836"/>
        <end position="849"/>
    </location>
</feature>
<feature type="strand" evidence="5">
    <location>
        <begin position="856"/>
        <end position="868"/>
    </location>
</feature>
<feature type="strand" evidence="5">
    <location>
        <begin position="875"/>
        <end position="878"/>
    </location>
</feature>
<feature type="turn" evidence="12">
    <location>
        <begin position="879"/>
        <end position="881"/>
    </location>
</feature>
<feature type="strand" evidence="5">
    <location>
        <begin position="883"/>
        <end position="890"/>
    </location>
</feature>
<feature type="strand" evidence="11">
    <location>
        <begin position="892"/>
        <end position="895"/>
    </location>
</feature>
<feature type="strand" evidence="5">
    <location>
        <begin position="905"/>
        <end position="908"/>
    </location>
</feature>
<feature type="helix" evidence="5">
    <location>
        <begin position="912"/>
        <end position="915"/>
    </location>
</feature>
<feature type="helix" evidence="5">
    <location>
        <begin position="920"/>
        <end position="933"/>
    </location>
</feature>
<feature type="strand" evidence="5">
    <location>
        <begin position="940"/>
        <end position="942"/>
    </location>
</feature>
<feature type="helix" evidence="5">
    <location>
        <begin position="946"/>
        <end position="949"/>
    </location>
</feature>
<feature type="strand" evidence="11">
    <location>
        <begin position="954"/>
        <end position="957"/>
    </location>
</feature>
<feature type="strand" evidence="5">
    <location>
        <begin position="962"/>
        <end position="964"/>
    </location>
</feature>
<feature type="strand" evidence="5">
    <location>
        <begin position="967"/>
        <end position="969"/>
    </location>
</feature>
<feature type="helix" evidence="5">
    <location>
        <begin position="973"/>
        <end position="980"/>
    </location>
</feature>
<feature type="strand" evidence="5">
    <location>
        <begin position="986"/>
        <end position="989"/>
    </location>
</feature>
<feature type="strand" evidence="5">
    <location>
        <begin position="997"/>
        <end position="999"/>
    </location>
</feature>
<feature type="turn" evidence="5">
    <location>
        <begin position="1004"/>
        <end position="1006"/>
    </location>
</feature>
<feature type="strand" evidence="5">
    <location>
        <begin position="1014"/>
        <end position="1025"/>
    </location>
</feature>
<feature type="helix" evidence="5">
    <location>
        <begin position="1028"/>
        <end position="1031"/>
    </location>
</feature>
<feature type="strand" evidence="5">
    <location>
        <begin position="1033"/>
        <end position="1037"/>
    </location>
</feature>
<feature type="strand" evidence="5">
    <location>
        <begin position="1040"/>
        <end position="1044"/>
    </location>
</feature>
<feature type="turn" evidence="5">
    <location>
        <begin position="1051"/>
        <end position="1054"/>
    </location>
</feature>
<feature type="strand" evidence="5">
    <location>
        <begin position="1057"/>
        <end position="1059"/>
    </location>
</feature>
<feature type="helix" evidence="5">
    <location>
        <begin position="1061"/>
        <end position="1070"/>
    </location>
</feature>
<feature type="helix" evidence="5">
    <location>
        <begin position="1073"/>
        <end position="1080"/>
    </location>
</feature>
<feature type="turn" evidence="5">
    <location>
        <begin position="1081"/>
        <end position="1085"/>
    </location>
</feature>
<feature type="helix" evidence="5">
    <location>
        <begin position="1087"/>
        <end position="1098"/>
    </location>
</feature>
<feature type="helix" evidence="5">
    <location>
        <begin position="1110"/>
        <end position="1120"/>
    </location>
</feature>
<feature type="turn" evidence="5">
    <location>
        <begin position="1121"/>
        <end position="1123"/>
    </location>
</feature>
<feature type="strand" evidence="5">
    <location>
        <begin position="1127"/>
        <end position="1129"/>
    </location>
</feature>
<feature type="strand" evidence="5">
    <location>
        <begin position="1131"/>
        <end position="1136"/>
    </location>
</feature>
<feature type="strand" evidence="6">
    <location>
        <begin position="1138"/>
        <end position="1140"/>
    </location>
</feature>
<dbReference type="EC" id="2.7.7.6" evidence="1"/>
<dbReference type="EMBL" id="AJ605718">
    <property type="protein sequence ID" value="CAE53837.1"/>
    <property type="molecule type" value="Genomic_DNA"/>
</dbReference>
<dbReference type="EMBL" id="CP000480">
    <property type="protein sequence ID" value="ABK70312.1"/>
    <property type="molecule type" value="Genomic_DNA"/>
</dbReference>
<dbReference type="EMBL" id="CP001663">
    <property type="protein sequence ID" value="AFP37801.1"/>
    <property type="status" value="ALT_INIT"/>
    <property type="molecule type" value="Genomic_DNA"/>
</dbReference>
<dbReference type="RefSeq" id="WP_011727628.1">
    <property type="nucleotide sequence ID" value="NZ_SIJM01000030.1"/>
</dbReference>
<dbReference type="RefSeq" id="YP_885753.1">
    <property type="nucleotide sequence ID" value="NC_008596.1"/>
</dbReference>
<dbReference type="PDB" id="5TW1">
    <property type="method" value="X-ray"/>
    <property type="resolution" value="2.76 A"/>
    <property type="chains" value="C=1-1169"/>
</dbReference>
<dbReference type="PDB" id="5VI5">
    <property type="method" value="X-ray"/>
    <property type="resolution" value="3.20 A"/>
    <property type="chains" value="C=1-1169"/>
</dbReference>
<dbReference type="PDB" id="5VI8">
    <property type="method" value="X-ray"/>
    <property type="resolution" value="2.76 A"/>
    <property type="chains" value="C=1-1169"/>
</dbReference>
<dbReference type="PDB" id="6CCE">
    <property type="method" value="X-ray"/>
    <property type="resolution" value="3.05 A"/>
    <property type="chains" value="C=1-1169"/>
</dbReference>
<dbReference type="PDB" id="6CCV">
    <property type="method" value="X-ray"/>
    <property type="resolution" value="3.05 A"/>
    <property type="chains" value="C=1-1169"/>
</dbReference>
<dbReference type="PDB" id="6DCF">
    <property type="method" value="X-ray"/>
    <property type="resolution" value="3.45 A"/>
    <property type="chains" value="C=1-1169"/>
</dbReference>
<dbReference type="PDB" id="6EYD">
    <property type="method" value="EM"/>
    <property type="resolution" value="4.20 A"/>
    <property type="chains" value="C=2-1169"/>
</dbReference>
<dbReference type="PDB" id="6F6W">
    <property type="method" value="EM"/>
    <property type="resolution" value="3.80 A"/>
    <property type="chains" value="C=2-1169"/>
</dbReference>
<dbReference type="PDB" id="6VVS">
    <property type="method" value="X-ray"/>
    <property type="resolution" value="3.11 A"/>
    <property type="chains" value="C=1-1169"/>
</dbReference>
<dbReference type="PDB" id="6VVT">
    <property type="method" value="X-ray"/>
    <property type="resolution" value="2.90 A"/>
    <property type="chains" value="C=1-1169"/>
</dbReference>
<dbReference type="PDB" id="6VVV">
    <property type="method" value="X-ray"/>
    <property type="resolution" value="3.20 A"/>
    <property type="chains" value="C=1-1169"/>
</dbReference>
<dbReference type="PDB" id="6YXU">
    <property type="method" value="EM"/>
    <property type="resolution" value="3.08 A"/>
    <property type="chains" value="C=1-1169"/>
</dbReference>
<dbReference type="PDB" id="6YYS">
    <property type="method" value="EM"/>
    <property type="resolution" value="3.08 A"/>
    <property type="chains" value="C=1-1169"/>
</dbReference>
<dbReference type="PDB" id="6Z11">
    <property type="method" value="EM"/>
    <property type="resolution" value="3.36 A"/>
    <property type="chains" value="C=1-1169"/>
</dbReference>
<dbReference type="PDB" id="7P5X">
    <property type="method" value="EM"/>
    <property type="resolution" value="3.20 A"/>
    <property type="chains" value="AC=1-1169"/>
</dbReference>
<dbReference type="PDB" id="8Q3I">
    <property type="method" value="EM"/>
    <property type="resolution" value="3.11 A"/>
    <property type="chains" value="C=1-1169"/>
</dbReference>
<dbReference type="PDB" id="8QN8">
    <property type="method" value="EM"/>
    <property type="resolution" value="3.14 A"/>
    <property type="chains" value="C=1-1169"/>
</dbReference>
<dbReference type="PDB" id="8QTI">
    <property type="method" value="EM"/>
    <property type="resolution" value="3.09 A"/>
    <property type="chains" value="C=1-1169"/>
</dbReference>
<dbReference type="PDB" id="8QU6">
    <property type="method" value="EM"/>
    <property type="resolution" value="3.45 A"/>
    <property type="chains" value="C=1-1169"/>
</dbReference>
<dbReference type="PDB" id="8R2M">
    <property type="method" value="EM"/>
    <property type="resolution" value="3.44 A"/>
    <property type="chains" value="C=1-1169"/>
</dbReference>
<dbReference type="PDB" id="8R3M">
    <property type="method" value="EM"/>
    <property type="resolution" value="3.49 A"/>
    <property type="chains" value="C=1-1169"/>
</dbReference>
<dbReference type="PDB" id="8R6P">
    <property type="method" value="EM"/>
    <property type="resolution" value="3.16 A"/>
    <property type="chains" value="C=1-1169"/>
</dbReference>
<dbReference type="PDB" id="8R6R">
    <property type="method" value="EM"/>
    <property type="resolution" value="3.89 A"/>
    <property type="chains" value="C=1-1169"/>
</dbReference>
<dbReference type="PDB" id="9FNE">
    <property type="method" value="EM"/>
    <property type="resolution" value="4.00 A"/>
    <property type="chains" value="C=1-1169"/>
</dbReference>
<dbReference type="PDBsum" id="5TW1"/>
<dbReference type="PDBsum" id="5VI5"/>
<dbReference type="PDBsum" id="5VI8"/>
<dbReference type="PDBsum" id="6CCE"/>
<dbReference type="PDBsum" id="6CCV"/>
<dbReference type="PDBsum" id="6DCF"/>
<dbReference type="PDBsum" id="6EYD"/>
<dbReference type="PDBsum" id="6F6W"/>
<dbReference type="PDBsum" id="6VVS"/>
<dbReference type="PDBsum" id="6VVT"/>
<dbReference type="PDBsum" id="6VVV"/>
<dbReference type="PDBsum" id="6YXU"/>
<dbReference type="PDBsum" id="6YYS"/>
<dbReference type="PDBsum" id="6Z11"/>
<dbReference type="PDBsum" id="7P5X"/>
<dbReference type="PDBsum" id="8Q3I"/>
<dbReference type="PDBsum" id="8QN8"/>
<dbReference type="PDBsum" id="8QTI"/>
<dbReference type="PDBsum" id="8QU6"/>
<dbReference type="PDBsum" id="8R2M"/>
<dbReference type="PDBsum" id="8R3M"/>
<dbReference type="PDBsum" id="8R6P"/>
<dbReference type="PDBsum" id="8R6R"/>
<dbReference type="PDBsum" id="9FNE"/>
<dbReference type="EMDB" id="EMD-10996"/>
<dbReference type="EMDB" id="EMD-11004"/>
<dbReference type="EMDB" id="EMD-11026"/>
<dbReference type="EMDB" id="EMD-13205"/>
<dbReference type="EMDB" id="EMD-18128"/>
<dbReference type="EMDB" id="EMD-18511"/>
<dbReference type="EMDB" id="EMD-18650"/>
<dbReference type="EMDB" id="EMD-18656"/>
<dbReference type="EMDB" id="EMD-18851"/>
<dbReference type="EMDB" id="EMD-18873"/>
<dbReference type="EMDB" id="EMD-18956"/>
<dbReference type="EMDB" id="EMD-18959"/>
<dbReference type="EMDB" id="EMD-3983"/>
<dbReference type="EMDB" id="EMD-4192"/>
<dbReference type="EMDB" id="EMD-50589"/>
<dbReference type="EMDB" id="EMD-50591"/>
<dbReference type="SMR" id="P60281"/>
<dbReference type="IntAct" id="P60281">
    <property type="interactions" value="2"/>
</dbReference>
<dbReference type="STRING" id="246196.MSMEG_1367"/>
<dbReference type="PaxDb" id="246196-MSMEI_1328"/>
<dbReference type="KEGG" id="msb:LJ00_06815"/>
<dbReference type="KEGG" id="msg:MSMEI_1328"/>
<dbReference type="KEGG" id="msm:MSMEG_1367"/>
<dbReference type="PATRIC" id="fig|246196.19.peg.1351"/>
<dbReference type="eggNOG" id="COG0085">
    <property type="taxonomic scope" value="Bacteria"/>
</dbReference>
<dbReference type="OrthoDB" id="9803954at2"/>
<dbReference type="BRENDA" id="2.7.7.6">
    <property type="organism ID" value="3512"/>
</dbReference>
<dbReference type="Proteomes" id="UP000000757">
    <property type="component" value="Chromosome"/>
</dbReference>
<dbReference type="Proteomes" id="UP000006158">
    <property type="component" value="Chromosome"/>
</dbReference>
<dbReference type="GO" id="GO:0000428">
    <property type="term" value="C:DNA-directed RNA polymerase complex"/>
    <property type="evidence" value="ECO:0007669"/>
    <property type="project" value="UniProtKB-KW"/>
</dbReference>
<dbReference type="GO" id="GO:0003677">
    <property type="term" value="F:DNA binding"/>
    <property type="evidence" value="ECO:0007669"/>
    <property type="project" value="UniProtKB-UniRule"/>
</dbReference>
<dbReference type="GO" id="GO:0003899">
    <property type="term" value="F:DNA-directed RNA polymerase activity"/>
    <property type="evidence" value="ECO:0007669"/>
    <property type="project" value="UniProtKB-UniRule"/>
</dbReference>
<dbReference type="GO" id="GO:0032549">
    <property type="term" value="F:ribonucleoside binding"/>
    <property type="evidence" value="ECO:0007669"/>
    <property type="project" value="InterPro"/>
</dbReference>
<dbReference type="GO" id="GO:0006351">
    <property type="term" value="P:DNA-templated transcription"/>
    <property type="evidence" value="ECO:0007669"/>
    <property type="project" value="UniProtKB-UniRule"/>
</dbReference>
<dbReference type="GO" id="GO:0046677">
    <property type="term" value="P:response to antibiotic"/>
    <property type="evidence" value="ECO:0007669"/>
    <property type="project" value="UniProtKB-KW"/>
</dbReference>
<dbReference type="CDD" id="cd00653">
    <property type="entry name" value="RNA_pol_B_RPB2"/>
    <property type="match status" value="1"/>
</dbReference>
<dbReference type="FunFam" id="2.40.50.150:FF:000001">
    <property type="entry name" value="DNA-directed RNA polymerase subunit beta"/>
    <property type="match status" value="1"/>
</dbReference>
<dbReference type="FunFam" id="3.90.1800.10:FF:000005">
    <property type="entry name" value="DNA-directed RNA polymerase subunit beta"/>
    <property type="match status" value="1"/>
</dbReference>
<dbReference type="Gene3D" id="2.40.50.100">
    <property type="match status" value="1"/>
</dbReference>
<dbReference type="Gene3D" id="2.40.50.150">
    <property type="match status" value="1"/>
</dbReference>
<dbReference type="Gene3D" id="3.90.1100.10">
    <property type="match status" value="1"/>
</dbReference>
<dbReference type="Gene3D" id="2.30.150.10">
    <property type="entry name" value="DNA-directed RNA polymerase, beta subunit, external 1 domain"/>
    <property type="match status" value="1"/>
</dbReference>
<dbReference type="Gene3D" id="2.40.270.10">
    <property type="entry name" value="DNA-directed RNA polymerase, subunit 2, domain 6"/>
    <property type="match status" value="1"/>
</dbReference>
<dbReference type="Gene3D" id="3.90.1800.10">
    <property type="entry name" value="RNA polymerase alpha subunit dimerisation domain"/>
    <property type="match status" value="1"/>
</dbReference>
<dbReference type="Gene3D" id="3.90.1110.10">
    <property type="entry name" value="RNA polymerase Rpb2, domain 2"/>
    <property type="match status" value="1"/>
</dbReference>
<dbReference type="HAMAP" id="MF_01321">
    <property type="entry name" value="RNApol_bact_RpoB"/>
    <property type="match status" value="1"/>
</dbReference>
<dbReference type="InterPro" id="IPR042107">
    <property type="entry name" value="DNA-dir_RNA_pol_bsu_ext_1_sf"/>
</dbReference>
<dbReference type="InterPro" id="IPR019462">
    <property type="entry name" value="DNA-dir_RNA_pol_bsu_external_1"/>
</dbReference>
<dbReference type="InterPro" id="IPR015712">
    <property type="entry name" value="DNA-dir_RNA_pol_su2"/>
</dbReference>
<dbReference type="InterPro" id="IPR007120">
    <property type="entry name" value="DNA-dir_RNAP_su2_dom"/>
</dbReference>
<dbReference type="InterPro" id="IPR037033">
    <property type="entry name" value="DNA-dir_RNAP_su2_hyb_sf"/>
</dbReference>
<dbReference type="InterPro" id="IPR010243">
    <property type="entry name" value="RNA_pol_bsu_bac"/>
</dbReference>
<dbReference type="InterPro" id="IPR007121">
    <property type="entry name" value="RNA_pol_bsu_CS"/>
</dbReference>
<dbReference type="InterPro" id="IPR007644">
    <property type="entry name" value="RNA_pol_bsu_protrusion"/>
</dbReference>
<dbReference type="InterPro" id="IPR007642">
    <property type="entry name" value="RNA_pol_Rpb2_2"/>
</dbReference>
<dbReference type="InterPro" id="IPR037034">
    <property type="entry name" value="RNA_pol_Rpb2_2_sf"/>
</dbReference>
<dbReference type="InterPro" id="IPR007645">
    <property type="entry name" value="RNA_pol_Rpb2_3"/>
</dbReference>
<dbReference type="InterPro" id="IPR007641">
    <property type="entry name" value="RNA_pol_Rpb2_7"/>
</dbReference>
<dbReference type="InterPro" id="IPR014724">
    <property type="entry name" value="RNA_pol_RPB2_OB-fold"/>
</dbReference>
<dbReference type="NCBIfam" id="NF001616">
    <property type="entry name" value="PRK00405.1"/>
    <property type="match status" value="1"/>
</dbReference>
<dbReference type="NCBIfam" id="TIGR02013">
    <property type="entry name" value="rpoB"/>
    <property type="match status" value="1"/>
</dbReference>
<dbReference type="PANTHER" id="PTHR20856">
    <property type="entry name" value="DNA-DIRECTED RNA POLYMERASE I SUBUNIT 2"/>
    <property type="match status" value="1"/>
</dbReference>
<dbReference type="Pfam" id="PF04563">
    <property type="entry name" value="RNA_pol_Rpb2_1"/>
    <property type="match status" value="1"/>
</dbReference>
<dbReference type="Pfam" id="PF04561">
    <property type="entry name" value="RNA_pol_Rpb2_2"/>
    <property type="match status" value="1"/>
</dbReference>
<dbReference type="Pfam" id="PF04565">
    <property type="entry name" value="RNA_pol_Rpb2_3"/>
    <property type="match status" value="1"/>
</dbReference>
<dbReference type="Pfam" id="PF10385">
    <property type="entry name" value="RNA_pol_Rpb2_45"/>
    <property type="match status" value="1"/>
</dbReference>
<dbReference type="Pfam" id="PF00562">
    <property type="entry name" value="RNA_pol_Rpb2_6"/>
    <property type="match status" value="1"/>
</dbReference>
<dbReference type="Pfam" id="PF04560">
    <property type="entry name" value="RNA_pol_Rpb2_7"/>
    <property type="match status" value="1"/>
</dbReference>
<dbReference type="SUPFAM" id="SSF64484">
    <property type="entry name" value="beta and beta-prime subunits of DNA dependent RNA-polymerase"/>
    <property type="match status" value="1"/>
</dbReference>
<dbReference type="PROSITE" id="PS01166">
    <property type="entry name" value="RNA_POL_BETA"/>
    <property type="match status" value="1"/>
</dbReference>
<proteinExistence type="evidence at protein level"/>
<evidence type="ECO:0000255" key="1">
    <source>
        <dbReference type="HAMAP-Rule" id="MF_01321"/>
    </source>
</evidence>
<evidence type="ECO:0000269" key="2">
    <source>
    </source>
</evidence>
<evidence type="ECO:0000269" key="3">
    <source>
    </source>
</evidence>
<evidence type="ECO:0000305" key="4"/>
<evidence type="ECO:0007829" key="5">
    <source>
        <dbReference type="PDB" id="5TW1"/>
    </source>
</evidence>
<evidence type="ECO:0007829" key="6">
    <source>
        <dbReference type="PDB" id="5VI5"/>
    </source>
</evidence>
<evidence type="ECO:0007829" key="7">
    <source>
        <dbReference type="PDB" id="5VI8"/>
    </source>
</evidence>
<evidence type="ECO:0007829" key="8">
    <source>
        <dbReference type="PDB" id="6CCE"/>
    </source>
</evidence>
<evidence type="ECO:0007829" key="9">
    <source>
        <dbReference type="PDB" id="6CCV"/>
    </source>
</evidence>
<evidence type="ECO:0007829" key="10">
    <source>
        <dbReference type="PDB" id="6DCF"/>
    </source>
</evidence>
<evidence type="ECO:0007829" key="11">
    <source>
        <dbReference type="PDB" id="6VVT"/>
    </source>
</evidence>
<evidence type="ECO:0007829" key="12">
    <source>
        <dbReference type="PDB" id="6YXU"/>
    </source>
</evidence>
<evidence type="ECO:0007829" key="13">
    <source>
        <dbReference type="PDB" id="6YYS"/>
    </source>
</evidence>
<evidence type="ECO:0007829" key="14">
    <source>
        <dbReference type="PDB" id="6Z11"/>
    </source>
</evidence>
<evidence type="ECO:0007829" key="15">
    <source>
        <dbReference type="PDB" id="8QN8"/>
    </source>
</evidence>
<evidence type="ECO:0007829" key="16">
    <source>
        <dbReference type="PDB" id="8QTI"/>
    </source>
</evidence>
<evidence type="ECO:0007829" key="17">
    <source>
        <dbReference type="PDB" id="8R6P"/>
    </source>
</evidence>
<name>RPOB_MYCS2</name>
<sequence length="1169" mass="128531">MLEGCILAVSSQSKSNAITNNSVPGAPNRVSFAKLREPLEVPGLLDVQTDSFEWLVGSDRWRQAAIDRGEENPVGGLEEVLAELSPIEDFSGSMSLSFSDPRFDEVKASVDECKDKDMTYAAPLFVTAEFINNNTGEIKSQTVFMGDFPMMTEKGTFIINGTERVVVSQLVRSPGVYFDETIDKSTEKTLHSVKVIPGRGAWLEFDVDKRDTVGVRIDRKRRQPVTVLLKALGWTNEQIVERFGFSEIMMGTLEKDTTSGTDEALLDIYRKLRPGEPPTKESAQTLLENLFFKEKRYDLARVGRYKVNKKLGLNAGKPITSSTLTEEDVVATIEYLVRLHEGQTSMTVPGGVEVPVEVDDIDHFGNRRLRTVGELIQNQIRVGLSRMERVVRERMTTQDVEAITPQTLINIRPVVAAIKEFFGTSQLSQFMDQNNPLSGLTHKRRLSALGPGGLSRERAGLEVRDVHPSHYGRMCPIETPEGPNIGLIGSLSVYARVNPFGFIETPYRKVENGVVTDQIDYLTADEEDRHVVAQANSPTDENGRFTEDRVMVRKKGGEVEFVSADQVDYMDVSPRQMVSVATAMIPFLEHDDANRALMGANMQRQAVPLVRSEAPLVGTGMELRAAIDAGDVVVADKTGVIEEVSADYITVMADDGTRQSYRLRKFARSNHGTCANQRPIVDAGQRVEAGQVIADGPCTQNGEMALGKNLLVAIMPWEGHNYEDAIILSNRLVEEDVLTSIHIEEHEIDARDTKLGAEEITRDIPNVSDEVLADLDERGIVRIGAEVRDGDILVGKVTPKGETELTPEERLLRAIFGEKAREVRDTSLKVPHGESGKVIGIRVFSREDDDELPAGVNELVRVYVAQKRKISDGDKLAGRHGNKGVIGKILPVEDMPFLPDGTPVDIILNTHGVPRRMNIGQILETHLGWVAKAGWNIDVAAGVPDWASKLPEELYSAPADSTVATPVFDGAQEGELAGLLGSTLPNRDGEVMVDADGKSTLFDGRSGEPFPYPVTVGYMYILKLHHLVDDKIHARSTGPYSMITQQPLGGKAQFGGQRFGEMECWAMQAYGAAYTLQELLTIKSDDTVGRVKVYEAIVKGENIPEPGIPESFKVLLKELQSLCLNVEVLSSDGAAIEMRDGDDEDLERAAANLGINLSRNESASVEDLA</sequence>
<keyword id="KW-0002">3D-structure</keyword>
<keyword id="KW-0046">Antibiotic resistance</keyword>
<keyword id="KW-0903">Direct protein sequencing</keyword>
<keyword id="KW-0240">DNA-directed RNA polymerase</keyword>
<keyword id="KW-0548">Nucleotidyltransferase</keyword>
<keyword id="KW-1185">Reference proteome</keyword>
<keyword id="KW-0804">Transcription</keyword>
<keyword id="KW-0808">Transferase</keyword>
<comment type="function">
    <text evidence="1 3">DNA-dependent RNA polymerase catalyzes the transcription of DNA into RNA using the four ribonucleoside triphosphates as substrates. This subunit often mutates to generate rifampicin (Rif) resistance. Interaction with RbpA partially restores Rif-inhibited transcription; once the subunit is Rif-resistant however RbpA no longer stimulates transcription.</text>
</comment>
<comment type="catalytic activity">
    <reaction evidence="1">
        <text>RNA(n) + a ribonucleoside 5'-triphosphate = RNA(n+1) + diphosphate</text>
        <dbReference type="Rhea" id="RHEA:21248"/>
        <dbReference type="Rhea" id="RHEA-COMP:14527"/>
        <dbReference type="Rhea" id="RHEA-COMP:17342"/>
        <dbReference type="ChEBI" id="CHEBI:33019"/>
        <dbReference type="ChEBI" id="CHEBI:61557"/>
        <dbReference type="ChEBI" id="CHEBI:140395"/>
        <dbReference type="EC" id="2.7.7.6"/>
    </reaction>
</comment>
<comment type="subunit">
    <text evidence="1 3">The RNAP catalytic core consists of 2 alpha, 1 beta, 1 beta' and 1 omega subunit. When a sigma factor is associated with the core the holoenzyme is formed, which can initiate transcription. Interacts with RbpA, which partially restores Rif-inhibited transcription.</text>
</comment>
<comment type="interaction">
    <interactant intactId="EBI-2408357">
        <id>P60281</id>
    </interactant>
    <interactant intactId="EBI-2408339">
        <id>A0R561</id>
        <label>carD</label>
    </interactant>
    <organismsDiffer>false</organismsDiffer>
    <experiments>2</experiments>
</comment>
<comment type="miscellaneous">
    <text>Mutations in the RRDR sequence (residues 423-449) confer rifampicin (Rif) resistance. Rif blocks transcription initiation but not elongation.</text>
</comment>
<comment type="similarity">
    <text evidence="1">Belongs to the RNA polymerase beta chain family.</text>
</comment>
<comment type="sequence caution" evidence="4">
    <conflict type="erroneous initiation">
        <sequence resource="EMBL-CDS" id="AFP37801"/>
    </conflict>
    <text>Truncated N-terminus.</text>
</comment>
<accession>P60281</accession>
<accession>A0QS65</accession>
<accession>I7G3Q0</accession>
<organism>
    <name type="scientific">Mycolicibacterium smegmatis (strain ATCC 700084 / mc(2)155)</name>
    <name type="common">Mycobacterium smegmatis</name>
    <dbReference type="NCBI Taxonomy" id="246196"/>
    <lineage>
        <taxon>Bacteria</taxon>
        <taxon>Bacillati</taxon>
        <taxon>Actinomycetota</taxon>
        <taxon>Actinomycetes</taxon>
        <taxon>Mycobacteriales</taxon>
        <taxon>Mycobacteriaceae</taxon>
        <taxon>Mycolicibacterium</taxon>
    </lineage>
</organism>
<reference key="1">
    <citation type="submission" date="2003-11" db="EMBL/GenBank/DDBJ databases">
        <title>Investigation of drug resistance in Mycobacterium smegmatis using differential gene expression analysis by microarray technology.</title>
        <authorList>
            <person name="Subramaniyan K."/>
            <person name="Gopalakrishnakone P."/>
        </authorList>
    </citation>
    <scope>NUCLEOTIDE SEQUENCE [GENOMIC DNA]</scope>
</reference>
<reference key="2">
    <citation type="submission" date="2006-10" db="EMBL/GenBank/DDBJ databases">
        <authorList>
            <person name="Fleischmann R.D."/>
            <person name="Dodson R.J."/>
            <person name="Haft D.H."/>
            <person name="Merkel J.S."/>
            <person name="Nelson W.C."/>
            <person name="Fraser C.M."/>
        </authorList>
    </citation>
    <scope>NUCLEOTIDE SEQUENCE [LARGE SCALE GENOMIC DNA]</scope>
    <source>
        <strain>ATCC 700084 / mc(2)155</strain>
    </source>
</reference>
<reference key="3">
    <citation type="journal article" date="2007" name="Genome Biol.">
        <title>Interrupted coding sequences in Mycobacterium smegmatis: authentic mutations or sequencing errors?</title>
        <authorList>
            <person name="Deshayes C."/>
            <person name="Perrodou E."/>
            <person name="Gallien S."/>
            <person name="Euphrasie D."/>
            <person name="Schaeffer C."/>
            <person name="Van-Dorsselaer A."/>
            <person name="Poch O."/>
            <person name="Lecompte O."/>
            <person name="Reyrat J.-M."/>
        </authorList>
    </citation>
    <scope>NUCLEOTIDE SEQUENCE [LARGE SCALE GENOMIC DNA]</scope>
    <source>
        <strain>ATCC 700084 / mc(2)155</strain>
    </source>
</reference>
<reference key="4">
    <citation type="journal article" date="2009" name="Genome Res.">
        <title>Ortho-proteogenomics: multiple proteomes investigation through orthology and a new MS-based protocol.</title>
        <authorList>
            <person name="Gallien S."/>
            <person name="Perrodou E."/>
            <person name="Carapito C."/>
            <person name="Deshayes C."/>
            <person name="Reyrat J.-M."/>
            <person name="Van Dorsselaer A."/>
            <person name="Poch O."/>
            <person name="Schaeffer C."/>
            <person name="Lecompte O."/>
        </authorList>
    </citation>
    <scope>NUCLEOTIDE SEQUENCE [LARGE SCALE GENOMIC DNA]</scope>
    <source>
        <strain>ATCC 700084 / mc(2)155</strain>
    </source>
</reference>
<reference key="5">
    <citation type="journal article" date="2010" name="Microbiology">
        <title>Role of an RNA polymerase interacting protein, MsRbpA, from Mycobacterium smegmatis in phenotypic tolerance to rifampicin.</title>
        <authorList>
            <person name="Dey A."/>
            <person name="Verma A.K."/>
            <person name="Chatterji D."/>
        </authorList>
    </citation>
    <scope>PROTEIN SEQUENCE OF 200-210; 371-381 AND 1149-1159</scope>
    <scope>FUNCTION</scope>
    <scope>INTERACTION WITH RBPA</scope>
    <scope>SUBUNIT</scope>
    <scope>ANTIBIOTIC RESISTANCE</scope>
    <scope>MUTAGENESIS OF ASP-432 AND SER-447</scope>
    <source>
        <strain>ATCC 700084 / mc(2)155</strain>
    </source>
</reference>
<reference key="6">
    <citation type="journal article" date="2007" name="DNA Repair">
        <title>A distinct role of formamidopyrimidine DNA glycosylase (MutM) in down-regulation of accumulation of G, C mutations and protection against oxidative stress in mycobacteria.</title>
        <authorList>
            <person name="Jain R."/>
            <person name="Kumar P."/>
            <person name="Varshney U."/>
        </authorList>
    </citation>
    <scope>ANTIBIOTIC RESISTANCE</scope>
    <scope>MUTAGENESIS OF GLN-429; ASP-432; HIS-442; ARG-445; SER-447 AND LEU-449</scope>
    <source>
        <strain>ATCC 700084 / mc(2)155</strain>
    </source>
</reference>
<protein>
    <recommendedName>
        <fullName evidence="1">DNA-directed RNA polymerase subunit beta</fullName>
        <shortName evidence="1">RNAP subunit beta</shortName>
        <ecNumber evidence="1">2.7.7.6</ecNumber>
    </recommendedName>
    <alternativeName>
        <fullName evidence="1">RNA polymerase subunit beta</fullName>
    </alternativeName>
    <alternativeName>
        <fullName evidence="1">Transcriptase subunit beta</fullName>
    </alternativeName>
</protein>
<gene>
    <name evidence="1" type="primary">rpoB</name>
    <name type="ordered locus">MSMEG_1367</name>
    <name type="ordered locus">MSMEI_1328</name>
</gene>